<organism>
    <name type="scientific">Acetivibrio thermocellus (strain ATCC 27405 / DSM 1237 / JCM 9322 / NBRC 103400 / NCIMB 10682 / NRRL B-4536 / VPI 7372)</name>
    <name type="common">Clostridium thermocellum</name>
    <dbReference type="NCBI Taxonomy" id="203119"/>
    <lineage>
        <taxon>Bacteria</taxon>
        <taxon>Bacillati</taxon>
        <taxon>Bacillota</taxon>
        <taxon>Clostridia</taxon>
        <taxon>Eubacteriales</taxon>
        <taxon>Oscillospiraceae</taxon>
        <taxon>Acetivibrio</taxon>
    </lineage>
</organism>
<name>MNMA_ACET2</name>
<keyword id="KW-0067">ATP-binding</keyword>
<keyword id="KW-0963">Cytoplasm</keyword>
<keyword id="KW-1015">Disulfide bond</keyword>
<keyword id="KW-0547">Nucleotide-binding</keyword>
<keyword id="KW-1185">Reference proteome</keyword>
<keyword id="KW-0694">RNA-binding</keyword>
<keyword id="KW-0808">Transferase</keyword>
<keyword id="KW-0819">tRNA processing</keyword>
<keyword id="KW-0820">tRNA-binding</keyword>
<gene>
    <name evidence="1" type="primary">mnmA</name>
    <name type="ordered locus">Cthe_0722</name>
</gene>
<sequence length="359" mass="40136">MSKKKVMVGMSGGVDSSVAAAILLEQGYEVIGATMQIWPDTDEETKLVEGGCCSLSAVDDARSVANKLGIPYYVLNFKDIFEKSVINYFKDEYLKGRTPNPCIACNRFVKFESMLNKALSMGIDYIATGHYAIITYDDNKKRYLLKKSVTQQKDQTYALYNVTQEQLKHILMPIGNFTKEQVRAKAKELGLYVASKPDSQEICFVNDNDYGKFIEENTDKEIKPGYFVDTKGNILGKHRGIIHYTVGQRKGLGIALGKPMYVVRIDAENNTVVLGDENEVYSKELTAYDLNFISIDKLEEPMRVKAKIRYSAKEADAVIYPLEDGKVRVVFDTPQRAVTPGQSVVFYDGDIVVGGGIIQ</sequence>
<accession>A3DDC8</accession>
<dbReference type="EC" id="2.8.1.13" evidence="1"/>
<dbReference type="EMBL" id="CP000568">
    <property type="protein sequence ID" value="ABN51957.1"/>
    <property type="molecule type" value="Genomic_DNA"/>
</dbReference>
<dbReference type="RefSeq" id="WP_003516239.1">
    <property type="nucleotide sequence ID" value="NC_009012.1"/>
</dbReference>
<dbReference type="SMR" id="A3DDC8"/>
<dbReference type="STRING" id="203119.Cthe_0722"/>
<dbReference type="GeneID" id="35804063"/>
<dbReference type="KEGG" id="cth:Cthe_0722"/>
<dbReference type="eggNOG" id="COG0482">
    <property type="taxonomic scope" value="Bacteria"/>
</dbReference>
<dbReference type="HOGENOM" id="CLU_035188_0_0_9"/>
<dbReference type="OrthoDB" id="9800696at2"/>
<dbReference type="Proteomes" id="UP000002145">
    <property type="component" value="Chromosome"/>
</dbReference>
<dbReference type="GO" id="GO:0005737">
    <property type="term" value="C:cytoplasm"/>
    <property type="evidence" value="ECO:0007669"/>
    <property type="project" value="UniProtKB-SubCell"/>
</dbReference>
<dbReference type="GO" id="GO:0005524">
    <property type="term" value="F:ATP binding"/>
    <property type="evidence" value="ECO:0007669"/>
    <property type="project" value="UniProtKB-KW"/>
</dbReference>
<dbReference type="GO" id="GO:0000049">
    <property type="term" value="F:tRNA binding"/>
    <property type="evidence" value="ECO:0007669"/>
    <property type="project" value="UniProtKB-KW"/>
</dbReference>
<dbReference type="GO" id="GO:0103016">
    <property type="term" value="F:tRNA-uridine 2-sulfurtransferase activity"/>
    <property type="evidence" value="ECO:0007669"/>
    <property type="project" value="UniProtKB-EC"/>
</dbReference>
<dbReference type="GO" id="GO:0002143">
    <property type="term" value="P:tRNA wobble position uridine thiolation"/>
    <property type="evidence" value="ECO:0007669"/>
    <property type="project" value="TreeGrafter"/>
</dbReference>
<dbReference type="CDD" id="cd01998">
    <property type="entry name" value="MnmA_TRMU-like"/>
    <property type="match status" value="1"/>
</dbReference>
<dbReference type="FunFam" id="2.30.30.280:FF:000001">
    <property type="entry name" value="tRNA-specific 2-thiouridylase MnmA"/>
    <property type="match status" value="1"/>
</dbReference>
<dbReference type="FunFam" id="2.40.30.10:FF:000023">
    <property type="entry name" value="tRNA-specific 2-thiouridylase MnmA"/>
    <property type="match status" value="1"/>
</dbReference>
<dbReference type="FunFam" id="3.40.50.620:FF:000115">
    <property type="entry name" value="tRNA-specific 2-thiouridylase MnmA"/>
    <property type="match status" value="1"/>
</dbReference>
<dbReference type="Gene3D" id="2.30.30.280">
    <property type="entry name" value="Adenine nucleotide alpha hydrolases-like domains"/>
    <property type="match status" value="1"/>
</dbReference>
<dbReference type="Gene3D" id="3.40.50.620">
    <property type="entry name" value="HUPs"/>
    <property type="match status" value="1"/>
</dbReference>
<dbReference type="Gene3D" id="2.40.30.10">
    <property type="entry name" value="Translation factors"/>
    <property type="match status" value="1"/>
</dbReference>
<dbReference type="HAMAP" id="MF_00144">
    <property type="entry name" value="tRNA_thiouridyl_MnmA"/>
    <property type="match status" value="1"/>
</dbReference>
<dbReference type="InterPro" id="IPR004506">
    <property type="entry name" value="MnmA-like"/>
</dbReference>
<dbReference type="InterPro" id="IPR046885">
    <property type="entry name" value="MnmA-like_C"/>
</dbReference>
<dbReference type="InterPro" id="IPR046884">
    <property type="entry name" value="MnmA-like_central"/>
</dbReference>
<dbReference type="InterPro" id="IPR023382">
    <property type="entry name" value="MnmA-like_central_sf"/>
</dbReference>
<dbReference type="InterPro" id="IPR014729">
    <property type="entry name" value="Rossmann-like_a/b/a_fold"/>
</dbReference>
<dbReference type="NCBIfam" id="NF001138">
    <property type="entry name" value="PRK00143.1"/>
    <property type="match status" value="1"/>
</dbReference>
<dbReference type="NCBIfam" id="TIGR00420">
    <property type="entry name" value="trmU"/>
    <property type="match status" value="1"/>
</dbReference>
<dbReference type="PANTHER" id="PTHR11933:SF5">
    <property type="entry name" value="MITOCHONDRIAL TRNA-SPECIFIC 2-THIOURIDYLASE 1"/>
    <property type="match status" value="1"/>
</dbReference>
<dbReference type="PANTHER" id="PTHR11933">
    <property type="entry name" value="TRNA 5-METHYLAMINOMETHYL-2-THIOURIDYLATE -METHYLTRANSFERASE"/>
    <property type="match status" value="1"/>
</dbReference>
<dbReference type="Pfam" id="PF03054">
    <property type="entry name" value="tRNA_Me_trans"/>
    <property type="match status" value="1"/>
</dbReference>
<dbReference type="Pfam" id="PF20258">
    <property type="entry name" value="tRNA_Me_trans_C"/>
    <property type="match status" value="1"/>
</dbReference>
<dbReference type="Pfam" id="PF20259">
    <property type="entry name" value="tRNA_Me_trans_M"/>
    <property type="match status" value="1"/>
</dbReference>
<dbReference type="SUPFAM" id="SSF52402">
    <property type="entry name" value="Adenine nucleotide alpha hydrolases-like"/>
    <property type="match status" value="1"/>
</dbReference>
<comment type="function">
    <text evidence="1">Catalyzes the 2-thiolation of uridine at the wobble position (U34) of tRNA, leading to the formation of s(2)U34.</text>
</comment>
<comment type="catalytic activity">
    <reaction evidence="1">
        <text>S-sulfanyl-L-cysteinyl-[protein] + uridine(34) in tRNA + AH2 + ATP = 2-thiouridine(34) in tRNA + L-cysteinyl-[protein] + A + AMP + diphosphate + H(+)</text>
        <dbReference type="Rhea" id="RHEA:47032"/>
        <dbReference type="Rhea" id="RHEA-COMP:10131"/>
        <dbReference type="Rhea" id="RHEA-COMP:11726"/>
        <dbReference type="Rhea" id="RHEA-COMP:11727"/>
        <dbReference type="Rhea" id="RHEA-COMP:11728"/>
        <dbReference type="ChEBI" id="CHEBI:13193"/>
        <dbReference type="ChEBI" id="CHEBI:15378"/>
        <dbReference type="ChEBI" id="CHEBI:17499"/>
        <dbReference type="ChEBI" id="CHEBI:29950"/>
        <dbReference type="ChEBI" id="CHEBI:30616"/>
        <dbReference type="ChEBI" id="CHEBI:33019"/>
        <dbReference type="ChEBI" id="CHEBI:61963"/>
        <dbReference type="ChEBI" id="CHEBI:65315"/>
        <dbReference type="ChEBI" id="CHEBI:87170"/>
        <dbReference type="ChEBI" id="CHEBI:456215"/>
        <dbReference type="EC" id="2.8.1.13"/>
    </reaction>
</comment>
<comment type="subcellular location">
    <subcellularLocation>
        <location evidence="1">Cytoplasm</location>
    </subcellularLocation>
</comment>
<comment type="similarity">
    <text evidence="1">Belongs to the MnmA/TRMU family.</text>
</comment>
<protein>
    <recommendedName>
        <fullName evidence="1">tRNA-specific 2-thiouridylase MnmA</fullName>
        <ecNumber evidence="1">2.8.1.13</ecNumber>
    </recommendedName>
</protein>
<feature type="chain" id="PRO_0000349601" description="tRNA-specific 2-thiouridylase MnmA">
    <location>
        <begin position="1"/>
        <end position="359"/>
    </location>
</feature>
<feature type="region of interest" description="Interaction with tRNA" evidence="1">
    <location>
        <begin position="153"/>
        <end position="155"/>
    </location>
</feature>
<feature type="region of interest" description="Interaction with tRNA" evidence="1">
    <location>
        <begin position="309"/>
        <end position="310"/>
    </location>
</feature>
<feature type="active site" description="Nucleophile" evidence="1">
    <location>
        <position position="105"/>
    </location>
</feature>
<feature type="active site" description="Cysteine persulfide intermediate" evidence="1">
    <location>
        <position position="203"/>
    </location>
</feature>
<feature type="binding site" evidence="1">
    <location>
        <begin position="9"/>
        <end position="16"/>
    </location>
    <ligand>
        <name>ATP</name>
        <dbReference type="ChEBI" id="CHEBI:30616"/>
    </ligand>
</feature>
<feature type="binding site" evidence="1">
    <location>
        <position position="35"/>
    </location>
    <ligand>
        <name>ATP</name>
        <dbReference type="ChEBI" id="CHEBI:30616"/>
    </ligand>
</feature>
<feature type="binding site" evidence="1">
    <location>
        <position position="129"/>
    </location>
    <ligand>
        <name>ATP</name>
        <dbReference type="ChEBI" id="CHEBI:30616"/>
    </ligand>
</feature>
<feature type="site" description="Interaction with tRNA" evidence="1">
    <location>
        <position position="130"/>
    </location>
</feature>
<feature type="site" description="Interaction with tRNA" evidence="1">
    <location>
        <position position="342"/>
    </location>
</feature>
<feature type="disulfide bond" description="Alternate" evidence="1">
    <location>
        <begin position="105"/>
        <end position="203"/>
    </location>
</feature>
<evidence type="ECO:0000255" key="1">
    <source>
        <dbReference type="HAMAP-Rule" id="MF_00144"/>
    </source>
</evidence>
<proteinExistence type="inferred from homology"/>
<reference key="1">
    <citation type="submission" date="2007-02" db="EMBL/GenBank/DDBJ databases">
        <title>Complete sequence of Clostridium thermocellum ATCC 27405.</title>
        <authorList>
            <consortium name="US DOE Joint Genome Institute"/>
            <person name="Copeland A."/>
            <person name="Lucas S."/>
            <person name="Lapidus A."/>
            <person name="Barry K."/>
            <person name="Detter J.C."/>
            <person name="Glavina del Rio T."/>
            <person name="Hammon N."/>
            <person name="Israni S."/>
            <person name="Dalin E."/>
            <person name="Tice H."/>
            <person name="Pitluck S."/>
            <person name="Chertkov O."/>
            <person name="Brettin T."/>
            <person name="Bruce D."/>
            <person name="Han C."/>
            <person name="Tapia R."/>
            <person name="Gilna P."/>
            <person name="Schmutz J."/>
            <person name="Larimer F."/>
            <person name="Land M."/>
            <person name="Hauser L."/>
            <person name="Kyrpides N."/>
            <person name="Mikhailova N."/>
            <person name="Wu J.H.D."/>
            <person name="Newcomb M."/>
            <person name="Richardson P."/>
        </authorList>
    </citation>
    <scope>NUCLEOTIDE SEQUENCE [LARGE SCALE GENOMIC DNA]</scope>
    <source>
        <strain>ATCC 27405 / DSM 1237 / JCM 9322 / NBRC 103400 / NCIMB 10682 / NRRL B-4536 / VPI 7372</strain>
    </source>
</reference>